<reference key="1">
    <citation type="journal article" date="1998" name="Nature">
        <title>The genome sequence of Rickettsia prowazekii and the origin of mitochondria.</title>
        <authorList>
            <person name="Andersson S.G.E."/>
            <person name="Zomorodipour A."/>
            <person name="Andersson J.O."/>
            <person name="Sicheritz-Ponten T."/>
            <person name="Alsmark U.C.M."/>
            <person name="Podowski R.M."/>
            <person name="Naeslund A.K."/>
            <person name="Eriksson A.-S."/>
            <person name="Winkler H.H."/>
            <person name="Kurland C.G."/>
        </authorList>
    </citation>
    <scope>NUCLEOTIDE SEQUENCE [LARGE SCALE GENOMIC DNA]</scope>
    <source>
        <strain>Madrid E</strain>
    </source>
</reference>
<organism>
    <name type="scientific">Rickettsia prowazekii (strain Madrid E)</name>
    <dbReference type="NCBI Taxonomy" id="272947"/>
    <lineage>
        <taxon>Bacteria</taxon>
        <taxon>Pseudomonadati</taxon>
        <taxon>Pseudomonadota</taxon>
        <taxon>Alphaproteobacteria</taxon>
        <taxon>Rickettsiales</taxon>
        <taxon>Rickettsiaceae</taxon>
        <taxon>Rickettsieae</taxon>
        <taxon>Rickettsia</taxon>
        <taxon>typhus group</taxon>
    </lineage>
</organism>
<proteinExistence type="inferred from homology"/>
<feature type="chain" id="PRO_0000139337" description="Proline--tRNA ligase">
    <location>
        <begin position="1"/>
        <end position="432"/>
    </location>
</feature>
<comment type="function">
    <text evidence="1">Catalyzes the attachment of proline to tRNA(Pro) in a two-step reaction: proline is first activated by ATP to form Pro-AMP and then transferred to the acceptor end of tRNA(Pro).</text>
</comment>
<comment type="catalytic activity">
    <reaction evidence="1">
        <text>tRNA(Pro) + L-proline + ATP = L-prolyl-tRNA(Pro) + AMP + diphosphate</text>
        <dbReference type="Rhea" id="RHEA:14305"/>
        <dbReference type="Rhea" id="RHEA-COMP:9700"/>
        <dbReference type="Rhea" id="RHEA-COMP:9702"/>
        <dbReference type="ChEBI" id="CHEBI:30616"/>
        <dbReference type="ChEBI" id="CHEBI:33019"/>
        <dbReference type="ChEBI" id="CHEBI:60039"/>
        <dbReference type="ChEBI" id="CHEBI:78442"/>
        <dbReference type="ChEBI" id="CHEBI:78532"/>
        <dbReference type="ChEBI" id="CHEBI:456215"/>
        <dbReference type="EC" id="6.1.1.15"/>
    </reaction>
</comment>
<comment type="subunit">
    <text evidence="1">Homodimer.</text>
</comment>
<comment type="subcellular location">
    <subcellularLocation>
        <location evidence="1">Cytoplasm</location>
    </subcellularLocation>
</comment>
<comment type="similarity">
    <text evidence="1">Belongs to the class-II aminoacyl-tRNA synthetase family. ProS type 2 subfamily.</text>
</comment>
<accession>Q9ZDE7</accession>
<evidence type="ECO:0000255" key="1">
    <source>
        <dbReference type="HAMAP-Rule" id="MF_01570"/>
    </source>
</evidence>
<dbReference type="EC" id="6.1.1.15" evidence="1"/>
<dbReference type="EMBL" id="AJ235271">
    <property type="protein sequence ID" value="CAA14841.1"/>
    <property type="molecule type" value="Genomic_DNA"/>
</dbReference>
<dbReference type="PIR" id="G71695">
    <property type="entry name" value="G71695"/>
</dbReference>
<dbReference type="RefSeq" id="NP_220765.1">
    <property type="nucleotide sequence ID" value="NC_000963.1"/>
</dbReference>
<dbReference type="RefSeq" id="WP_004597559.1">
    <property type="nucleotide sequence ID" value="NC_000963.1"/>
</dbReference>
<dbReference type="SMR" id="Q9ZDE7"/>
<dbReference type="STRING" id="272947.gene:17555464"/>
<dbReference type="EnsemblBacteria" id="CAA14841">
    <property type="protein sequence ID" value="CAA14841"/>
    <property type="gene ID" value="CAA14841"/>
</dbReference>
<dbReference type="GeneID" id="57569508"/>
<dbReference type="KEGG" id="rpr:RP384"/>
<dbReference type="PATRIC" id="fig|272947.5.peg.394"/>
<dbReference type="eggNOG" id="COG0442">
    <property type="taxonomic scope" value="Bacteria"/>
</dbReference>
<dbReference type="HOGENOM" id="CLU_016739_4_2_5"/>
<dbReference type="OrthoDB" id="9809052at2"/>
<dbReference type="Proteomes" id="UP000002480">
    <property type="component" value="Chromosome"/>
</dbReference>
<dbReference type="GO" id="GO:0005829">
    <property type="term" value="C:cytosol"/>
    <property type="evidence" value="ECO:0007669"/>
    <property type="project" value="TreeGrafter"/>
</dbReference>
<dbReference type="GO" id="GO:0005524">
    <property type="term" value="F:ATP binding"/>
    <property type="evidence" value="ECO:0007669"/>
    <property type="project" value="UniProtKB-UniRule"/>
</dbReference>
<dbReference type="GO" id="GO:0004827">
    <property type="term" value="F:proline-tRNA ligase activity"/>
    <property type="evidence" value="ECO:0007669"/>
    <property type="project" value="UniProtKB-UniRule"/>
</dbReference>
<dbReference type="GO" id="GO:0006433">
    <property type="term" value="P:prolyl-tRNA aminoacylation"/>
    <property type="evidence" value="ECO:0007669"/>
    <property type="project" value="UniProtKB-UniRule"/>
</dbReference>
<dbReference type="CDD" id="cd00861">
    <property type="entry name" value="ProRS_anticodon_short"/>
    <property type="match status" value="1"/>
</dbReference>
<dbReference type="CDD" id="cd00779">
    <property type="entry name" value="ProRS_core_prok"/>
    <property type="match status" value="1"/>
</dbReference>
<dbReference type="FunFam" id="3.30.930.10:FF:000042">
    <property type="entry name" value="probable proline--tRNA ligase, mitochondrial"/>
    <property type="match status" value="1"/>
</dbReference>
<dbReference type="FunFam" id="3.40.50.800:FF:000032">
    <property type="entry name" value="Proline--tRNA ligase"/>
    <property type="match status" value="1"/>
</dbReference>
<dbReference type="Gene3D" id="3.40.50.800">
    <property type="entry name" value="Anticodon-binding domain"/>
    <property type="match status" value="1"/>
</dbReference>
<dbReference type="Gene3D" id="3.30.930.10">
    <property type="entry name" value="Bira Bifunctional Protein, Domain 2"/>
    <property type="match status" value="1"/>
</dbReference>
<dbReference type="HAMAP" id="MF_01570">
    <property type="entry name" value="Pro_tRNA_synth_type2"/>
    <property type="match status" value="1"/>
</dbReference>
<dbReference type="InterPro" id="IPR002314">
    <property type="entry name" value="aa-tRNA-synt_IIb"/>
</dbReference>
<dbReference type="InterPro" id="IPR006195">
    <property type="entry name" value="aa-tRNA-synth_II"/>
</dbReference>
<dbReference type="InterPro" id="IPR045864">
    <property type="entry name" value="aa-tRNA-synth_II/BPL/LPL"/>
</dbReference>
<dbReference type="InterPro" id="IPR004154">
    <property type="entry name" value="Anticodon-bd"/>
</dbReference>
<dbReference type="InterPro" id="IPR036621">
    <property type="entry name" value="Anticodon-bd_dom_sf"/>
</dbReference>
<dbReference type="InterPro" id="IPR002316">
    <property type="entry name" value="Pro-tRNA-ligase_IIa"/>
</dbReference>
<dbReference type="InterPro" id="IPR004500">
    <property type="entry name" value="Pro-tRNA-synth_IIa_bac-type"/>
</dbReference>
<dbReference type="InterPro" id="IPR050062">
    <property type="entry name" value="Pro-tRNA_synthetase"/>
</dbReference>
<dbReference type="InterPro" id="IPR023716">
    <property type="entry name" value="Prolyl-tRNA_ligase_IIa_type2"/>
</dbReference>
<dbReference type="InterPro" id="IPR044140">
    <property type="entry name" value="ProRS_anticodon_short"/>
</dbReference>
<dbReference type="InterPro" id="IPR033730">
    <property type="entry name" value="ProRS_core_prok"/>
</dbReference>
<dbReference type="NCBIfam" id="NF008979">
    <property type="entry name" value="PRK12325.1"/>
    <property type="match status" value="1"/>
</dbReference>
<dbReference type="NCBIfam" id="TIGR00409">
    <property type="entry name" value="proS_fam_II"/>
    <property type="match status" value="1"/>
</dbReference>
<dbReference type="PANTHER" id="PTHR42753">
    <property type="entry name" value="MITOCHONDRIAL RIBOSOME PROTEIN L39/PROLYL-TRNA LIGASE FAMILY MEMBER"/>
    <property type="match status" value="1"/>
</dbReference>
<dbReference type="PANTHER" id="PTHR42753:SF2">
    <property type="entry name" value="PROLINE--TRNA LIGASE"/>
    <property type="match status" value="1"/>
</dbReference>
<dbReference type="Pfam" id="PF03129">
    <property type="entry name" value="HGTP_anticodon"/>
    <property type="match status" value="1"/>
</dbReference>
<dbReference type="Pfam" id="PF00587">
    <property type="entry name" value="tRNA-synt_2b"/>
    <property type="match status" value="1"/>
</dbReference>
<dbReference type="PRINTS" id="PR01046">
    <property type="entry name" value="TRNASYNTHPRO"/>
</dbReference>
<dbReference type="SUPFAM" id="SSF52954">
    <property type="entry name" value="Class II aaRS ABD-related"/>
    <property type="match status" value="1"/>
</dbReference>
<dbReference type="SUPFAM" id="SSF55681">
    <property type="entry name" value="Class II aaRS and biotin synthetases"/>
    <property type="match status" value="1"/>
</dbReference>
<dbReference type="PROSITE" id="PS50862">
    <property type="entry name" value="AA_TRNA_LIGASE_II"/>
    <property type="match status" value="1"/>
</dbReference>
<name>SYP_RICPR</name>
<gene>
    <name evidence="1" type="primary">proS</name>
    <name type="ordered locus">RP384</name>
</gene>
<sequence>MLLSKYFLPILKEEPSEAKVISHKLMLRSGMIMKQAAGLYTWLPLGLKVLKNIENVVRSNMNKVGALEVLMPCIQPAHLWIESGRFEHYGKEMLKFQDRHDNTLLFGPTNEDMITDIFRRNIKSYKDLPKNLYHIQWKFRDEIRPRFGVMRGREFLMKDAYSFDINQKNAVNTYNKMYKAYMNTFRDLGVFAIPVIADNGPIGGNLSHEFHIVAETGESTIYYDKRFKILKDNPDIDVEEIKGWYAAAEEKHDVNKLSSFPEGITRSKGIEVGHIFYIGSKYSVNMNALINDEYGKLIPVEMSSYGIGISRLAAAIIEANCDKKGIIWPCSVAPFKVSLINLNIHDNKCVELAAKTDKELSHQNIEVLYDDTDARPGSKFATHDLIGSPYQIIIGPKKAANNIVELKDRKTGVLEDIEVENIINYIKNIDSI</sequence>
<protein>
    <recommendedName>
        <fullName evidence="1">Proline--tRNA ligase</fullName>
        <ecNumber evidence="1">6.1.1.15</ecNumber>
    </recommendedName>
    <alternativeName>
        <fullName evidence="1">Prolyl-tRNA synthetase</fullName>
        <shortName evidence="1">ProRS</shortName>
    </alternativeName>
</protein>
<keyword id="KW-0030">Aminoacyl-tRNA synthetase</keyword>
<keyword id="KW-0067">ATP-binding</keyword>
<keyword id="KW-0963">Cytoplasm</keyword>
<keyword id="KW-0436">Ligase</keyword>
<keyword id="KW-0547">Nucleotide-binding</keyword>
<keyword id="KW-0648">Protein biosynthesis</keyword>
<keyword id="KW-1185">Reference proteome</keyword>